<keyword id="KW-0312">Gluconeogenesis</keyword>
<keyword id="KW-0324">Glycolysis</keyword>
<keyword id="KW-0413">Isomerase</keyword>
<keyword id="KW-1185">Reference proteome</keyword>
<name>GPMA_RALN1</name>
<feature type="chain" id="PRO_0000179903" description="2,3-bisphosphoglycerate-dependent phosphoglycerate mutase">
    <location>
        <begin position="1"/>
        <end position="248"/>
    </location>
</feature>
<feature type="active site" description="Tele-phosphohistidine intermediate" evidence="1">
    <location>
        <position position="9"/>
    </location>
</feature>
<feature type="active site" description="Proton donor/acceptor" evidence="1">
    <location>
        <position position="87"/>
    </location>
</feature>
<feature type="binding site" evidence="1">
    <location>
        <begin position="8"/>
        <end position="15"/>
    </location>
    <ligand>
        <name>substrate</name>
    </ligand>
</feature>
<feature type="binding site" evidence="1">
    <location>
        <begin position="21"/>
        <end position="22"/>
    </location>
    <ligand>
        <name>substrate</name>
    </ligand>
</feature>
<feature type="binding site" evidence="1">
    <location>
        <position position="60"/>
    </location>
    <ligand>
        <name>substrate</name>
    </ligand>
</feature>
<feature type="binding site" evidence="1">
    <location>
        <begin position="87"/>
        <end position="90"/>
    </location>
    <ligand>
        <name>substrate</name>
    </ligand>
</feature>
<feature type="binding site" evidence="1">
    <location>
        <position position="98"/>
    </location>
    <ligand>
        <name>substrate</name>
    </ligand>
</feature>
<feature type="binding site" evidence="1">
    <location>
        <begin position="114"/>
        <end position="115"/>
    </location>
    <ligand>
        <name>substrate</name>
    </ligand>
</feature>
<feature type="binding site" evidence="1">
    <location>
        <begin position="183"/>
        <end position="184"/>
    </location>
    <ligand>
        <name>substrate</name>
    </ligand>
</feature>
<feature type="site" description="Transition state stabilizer" evidence="1">
    <location>
        <position position="182"/>
    </location>
</feature>
<comment type="function">
    <text evidence="1">Catalyzes the interconversion of 2-phosphoglycerate and 3-phosphoglycerate.</text>
</comment>
<comment type="catalytic activity">
    <reaction evidence="1">
        <text>(2R)-2-phosphoglycerate = (2R)-3-phosphoglycerate</text>
        <dbReference type="Rhea" id="RHEA:15901"/>
        <dbReference type="ChEBI" id="CHEBI:58272"/>
        <dbReference type="ChEBI" id="CHEBI:58289"/>
        <dbReference type="EC" id="5.4.2.11"/>
    </reaction>
</comment>
<comment type="pathway">
    <text evidence="1">Carbohydrate degradation; glycolysis; pyruvate from D-glyceraldehyde 3-phosphate: step 3/5.</text>
</comment>
<comment type="subunit">
    <text evidence="1">Homodimer.</text>
</comment>
<comment type="similarity">
    <text evidence="1">Belongs to the phosphoglycerate mutase family. BPG-dependent PGAM subfamily.</text>
</comment>
<comment type="sequence caution" evidence="2">
    <conflict type="erroneous initiation">
        <sequence resource="EMBL-CDS" id="CAD13881"/>
    </conflict>
    <text>Extended N-terminus.</text>
</comment>
<reference key="1">
    <citation type="journal article" date="2002" name="Nature">
        <title>Genome sequence of the plant pathogen Ralstonia solanacearum.</title>
        <authorList>
            <person name="Salanoubat M."/>
            <person name="Genin S."/>
            <person name="Artiguenave F."/>
            <person name="Gouzy J."/>
            <person name="Mangenot S."/>
            <person name="Arlat M."/>
            <person name="Billault A."/>
            <person name="Brottier P."/>
            <person name="Camus J.-C."/>
            <person name="Cattolico L."/>
            <person name="Chandler M."/>
            <person name="Choisne N."/>
            <person name="Claudel-Renard C."/>
            <person name="Cunnac S."/>
            <person name="Demange N."/>
            <person name="Gaspin C."/>
            <person name="Lavie M."/>
            <person name="Moisan A."/>
            <person name="Robert C."/>
            <person name="Saurin W."/>
            <person name="Schiex T."/>
            <person name="Siguier P."/>
            <person name="Thebault P."/>
            <person name="Whalen M."/>
            <person name="Wincker P."/>
            <person name="Levy M."/>
            <person name="Weissenbach J."/>
            <person name="Boucher C.A."/>
        </authorList>
    </citation>
    <scope>NUCLEOTIDE SEQUENCE [LARGE SCALE GENOMIC DNA]</scope>
    <source>
        <strain>ATCC BAA-1114 / GMI1000</strain>
    </source>
</reference>
<proteinExistence type="inferred from homology"/>
<sequence length="248" mass="27746">MHKLVLIRHGESTWNLENRFTGWVDVDLTDTGIAQARQGGRLLREAGFTFDLAYTSVLKRAIRTLWHVQDEMDLMWIPTRTEWRLNERHYGGLSGLNKAETAAQYGDQQVLVWRRSYDTPPPALEAGDERDAYGNPRYAGLPREQVPLTECLKDTVARVLPLWETSIAPDIKSGKRVVIAAHGNSIRALVKYLDNISDDDIVGLNIPNGTPLVYELDANLKPIRHYYLGDQEAIAASLAAVAGQGKAK</sequence>
<accession>Q8Y2I3</accession>
<evidence type="ECO:0000255" key="1">
    <source>
        <dbReference type="HAMAP-Rule" id="MF_01039"/>
    </source>
</evidence>
<evidence type="ECO:0000305" key="2"/>
<organism>
    <name type="scientific">Ralstonia nicotianae (strain ATCC BAA-1114 / GMI1000)</name>
    <name type="common">Ralstonia solanacearum</name>
    <dbReference type="NCBI Taxonomy" id="267608"/>
    <lineage>
        <taxon>Bacteria</taxon>
        <taxon>Pseudomonadati</taxon>
        <taxon>Pseudomonadota</taxon>
        <taxon>Betaproteobacteria</taxon>
        <taxon>Burkholderiales</taxon>
        <taxon>Burkholderiaceae</taxon>
        <taxon>Ralstonia</taxon>
        <taxon>Ralstonia solanacearum species complex</taxon>
    </lineage>
</organism>
<gene>
    <name evidence="1" type="primary">gpmA</name>
    <name type="ordered locus">RSc0353</name>
    <name type="ORF">RS03320</name>
</gene>
<dbReference type="EC" id="5.4.2.11" evidence="1"/>
<dbReference type="EMBL" id="AL646052">
    <property type="protein sequence ID" value="CAD13881.1"/>
    <property type="status" value="ALT_INIT"/>
    <property type="molecule type" value="Genomic_DNA"/>
</dbReference>
<dbReference type="RefSeq" id="WP_028852550.1">
    <property type="nucleotide sequence ID" value="NC_003295.1"/>
</dbReference>
<dbReference type="SMR" id="Q8Y2I3"/>
<dbReference type="STRING" id="267608.RSc0353"/>
<dbReference type="EnsemblBacteria" id="CAD13881">
    <property type="protein sequence ID" value="CAD13881"/>
    <property type="gene ID" value="RSc0353"/>
</dbReference>
<dbReference type="KEGG" id="rso:RSc0353"/>
<dbReference type="PATRIC" id="fig|267608.8.peg.359"/>
<dbReference type="eggNOG" id="COG0588">
    <property type="taxonomic scope" value="Bacteria"/>
</dbReference>
<dbReference type="HOGENOM" id="CLU_033323_1_1_4"/>
<dbReference type="UniPathway" id="UPA00109">
    <property type="reaction ID" value="UER00186"/>
</dbReference>
<dbReference type="Proteomes" id="UP000001436">
    <property type="component" value="Chromosome"/>
</dbReference>
<dbReference type="GO" id="GO:0004619">
    <property type="term" value="F:phosphoglycerate mutase activity"/>
    <property type="evidence" value="ECO:0007669"/>
    <property type="project" value="UniProtKB-EC"/>
</dbReference>
<dbReference type="GO" id="GO:0006094">
    <property type="term" value="P:gluconeogenesis"/>
    <property type="evidence" value="ECO:0007669"/>
    <property type="project" value="UniProtKB-UniRule"/>
</dbReference>
<dbReference type="GO" id="GO:0006096">
    <property type="term" value="P:glycolytic process"/>
    <property type="evidence" value="ECO:0007669"/>
    <property type="project" value="UniProtKB-UniRule"/>
</dbReference>
<dbReference type="CDD" id="cd07067">
    <property type="entry name" value="HP_PGM_like"/>
    <property type="match status" value="1"/>
</dbReference>
<dbReference type="FunFam" id="3.40.50.1240:FF:000003">
    <property type="entry name" value="2,3-bisphosphoglycerate-dependent phosphoglycerate mutase"/>
    <property type="match status" value="1"/>
</dbReference>
<dbReference type="Gene3D" id="3.40.50.1240">
    <property type="entry name" value="Phosphoglycerate mutase-like"/>
    <property type="match status" value="1"/>
</dbReference>
<dbReference type="HAMAP" id="MF_01039">
    <property type="entry name" value="PGAM_GpmA"/>
    <property type="match status" value="1"/>
</dbReference>
<dbReference type="InterPro" id="IPR013078">
    <property type="entry name" value="His_Pase_superF_clade-1"/>
</dbReference>
<dbReference type="InterPro" id="IPR029033">
    <property type="entry name" value="His_PPase_superfam"/>
</dbReference>
<dbReference type="InterPro" id="IPR001345">
    <property type="entry name" value="PG/BPGM_mutase_AS"/>
</dbReference>
<dbReference type="InterPro" id="IPR005952">
    <property type="entry name" value="Phosphogly_mut1"/>
</dbReference>
<dbReference type="NCBIfam" id="TIGR01258">
    <property type="entry name" value="pgm_1"/>
    <property type="match status" value="1"/>
</dbReference>
<dbReference type="NCBIfam" id="NF010713">
    <property type="entry name" value="PRK14115.1"/>
    <property type="match status" value="1"/>
</dbReference>
<dbReference type="PANTHER" id="PTHR11931">
    <property type="entry name" value="PHOSPHOGLYCERATE MUTASE"/>
    <property type="match status" value="1"/>
</dbReference>
<dbReference type="Pfam" id="PF00300">
    <property type="entry name" value="His_Phos_1"/>
    <property type="match status" value="2"/>
</dbReference>
<dbReference type="PIRSF" id="PIRSF000709">
    <property type="entry name" value="6PFK_2-Ptase"/>
    <property type="match status" value="1"/>
</dbReference>
<dbReference type="SMART" id="SM00855">
    <property type="entry name" value="PGAM"/>
    <property type="match status" value="1"/>
</dbReference>
<dbReference type="SUPFAM" id="SSF53254">
    <property type="entry name" value="Phosphoglycerate mutase-like"/>
    <property type="match status" value="1"/>
</dbReference>
<dbReference type="PROSITE" id="PS00175">
    <property type="entry name" value="PG_MUTASE"/>
    <property type="match status" value="1"/>
</dbReference>
<protein>
    <recommendedName>
        <fullName evidence="1">2,3-bisphosphoglycerate-dependent phosphoglycerate mutase</fullName>
        <shortName evidence="1">BPG-dependent PGAM</shortName>
        <shortName evidence="1">PGAM</shortName>
        <shortName evidence="1">Phosphoglyceromutase</shortName>
        <shortName evidence="1">dPGM</shortName>
        <ecNumber evidence="1">5.4.2.11</ecNumber>
    </recommendedName>
</protein>